<dbReference type="EMBL" id="AF296834">
    <property type="status" value="NOT_ANNOTATED_CDS"/>
    <property type="molecule type" value="Genomic_DNA"/>
</dbReference>
<dbReference type="EMBL" id="CP002688">
    <property type="protein sequence ID" value="AED92901.1"/>
    <property type="molecule type" value="Genomic_DNA"/>
</dbReference>
<dbReference type="EMBL" id="AY054210">
    <property type="protein sequence ID" value="AAL06871.1"/>
    <property type="molecule type" value="mRNA"/>
</dbReference>
<dbReference type="EMBL" id="AY062651">
    <property type="protein sequence ID" value="AAL32729.1"/>
    <property type="molecule type" value="mRNA"/>
</dbReference>
<dbReference type="EMBL" id="AY085104">
    <property type="protein sequence ID" value="AAM61658.1"/>
    <property type="molecule type" value="mRNA"/>
</dbReference>
<dbReference type="EMBL" id="BT002090">
    <property type="protein sequence ID" value="AAN72101.1"/>
    <property type="molecule type" value="mRNA"/>
</dbReference>
<dbReference type="RefSeq" id="NP_197589.1">
    <property type="nucleotide sequence ID" value="NM_122097.3"/>
</dbReference>
<dbReference type="SMR" id="Q940P8"/>
<dbReference type="FunCoup" id="Q940P8">
    <property type="interactions" value="5060"/>
</dbReference>
<dbReference type="IntAct" id="Q940P8">
    <property type="interactions" value="5"/>
</dbReference>
<dbReference type="STRING" id="3702.Q940P8"/>
<dbReference type="iPTMnet" id="Q940P8"/>
<dbReference type="PaxDb" id="3702-AT5G20890.1"/>
<dbReference type="ProMEX" id="Q940P8"/>
<dbReference type="ProteomicsDB" id="234208"/>
<dbReference type="EnsemblPlants" id="AT5G20890.1">
    <property type="protein sequence ID" value="AT5G20890.1"/>
    <property type="gene ID" value="AT5G20890"/>
</dbReference>
<dbReference type="GeneID" id="832213"/>
<dbReference type="Gramene" id="AT5G20890.1">
    <property type="protein sequence ID" value="AT5G20890.1"/>
    <property type="gene ID" value="AT5G20890"/>
</dbReference>
<dbReference type="KEGG" id="ath:AT5G20890"/>
<dbReference type="Araport" id="AT5G20890"/>
<dbReference type="TAIR" id="AT5G20890"/>
<dbReference type="eggNOG" id="KOG0363">
    <property type="taxonomic scope" value="Eukaryota"/>
</dbReference>
<dbReference type="HOGENOM" id="CLU_008891_6_2_1"/>
<dbReference type="InParanoid" id="Q940P8"/>
<dbReference type="OMA" id="CAEMVMS"/>
<dbReference type="OrthoDB" id="1040391at2759"/>
<dbReference type="PhylomeDB" id="Q940P8"/>
<dbReference type="BRENDA" id="3.6.4.B10">
    <property type="organism ID" value="399"/>
</dbReference>
<dbReference type="CD-CODE" id="4299E36E">
    <property type="entry name" value="Nucleolus"/>
</dbReference>
<dbReference type="PRO" id="PR:Q940P8"/>
<dbReference type="Proteomes" id="UP000006548">
    <property type="component" value="Chromosome 5"/>
</dbReference>
<dbReference type="ExpressionAtlas" id="Q940P8">
    <property type="expression patterns" value="baseline and differential"/>
</dbReference>
<dbReference type="GO" id="GO:0005832">
    <property type="term" value="C:chaperonin-containing T-complex"/>
    <property type="evidence" value="ECO:0007669"/>
    <property type="project" value="InterPro"/>
</dbReference>
<dbReference type="GO" id="GO:0009505">
    <property type="term" value="C:plant-type cell wall"/>
    <property type="evidence" value="ECO:0007005"/>
    <property type="project" value="TAIR"/>
</dbReference>
<dbReference type="GO" id="GO:0009536">
    <property type="term" value="C:plastid"/>
    <property type="evidence" value="ECO:0007005"/>
    <property type="project" value="TAIR"/>
</dbReference>
<dbReference type="GO" id="GO:0005524">
    <property type="term" value="F:ATP binding"/>
    <property type="evidence" value="ECO:0007669"/>
    <property type="project" value="UniProtKB-KW"/>
</dbReference>
<dbReference type="GO" id="GO:0016887">
    <property type="term" value="F:ATP hydrolysis activity"/>
    <property type="evidence" value="ECO:0007669"/>
    <property type="project" value="InterPro"/>
</dbReference>
<dbReference type="GO" id="GO:0140662">
    <property type="term" value="F:ATP-dependent protein folding chaperone"/>
    <property type="evidence" value="ECO:0007669"/>
    <property type="project" value="InterPro"/>
</dbReference>
<dbReference type="GO" id="GO:0051082">
    <property type="term" value="F:unfolded protein binding"/>
    <property type="evidence" value="ECO:0007669"/>
    <property type="project" value="InterPro"/>
</dbReference>
<dbReference type="CDD" id="cd03336">
    <property type="entry name" value="TCP1_beta"/>
    <property type="match status" value="1"/>
</dbReference>
<dbReference type="FunFam" id="3.30.260.10:FF:000025">
    <property type="entry name" value="Chaperonin containing TCP1 subunit 2"/>
    <property type="match status" value="1"/>
</dbReference>
<dbReference type="FunFam" id="3.50.7.10:FF:000002">
    <property type="entry name" value="T-complex protein 1 subunit beta"/>
    <property type="match status" value="1"/>
</dbReference>
<dbReference type="FunFam" id="1.10.560.10:FF:000017">
    <property type="entry name" value="T-complex protein 1 subunit eta"/>
    <property type="match status" value="1"/>
</dbReference>
<dbReference type="Gene3D" id="3.50.7.10">
    <property type="entry name" value="GroEL"/>
    <property type="match status" value="1"/>
</dbReference>
<dbReference type="Gene3D" id="1.10.560.10">
    <property type="entry name" value="GroEL-like equatorial domain"/>
    <property type="match status" value="1"/>
</dbReference>
<dbReference type="Gene3D" id="3.30.260.10">
    <property type="entry name" value="TCP-1-like chaperonin intermediate domain"/>
    <property type="match status" value="1"/>
</dbReference>
<dbReference type="InterPro" id="IPR012716">
    <property type="entry name" value="Chap_CCT_beta"/>
</dbReference>
<dbReference type="InterPro" id="IPR017998">
    <property type="entry name" value="Chaperone_TCP-1"/>
</dbReference>
<dbReference type="InterPro" id="IPR002194">
    <property type="entry name" value="Chaperonin_TCP-1_CS"/>
</dbReference>
<dbReference type="InterPro" id="IPR002423">
    <property type="entry name" value="Cpn60/GroEL/TCP-1"/>
</dbReference>
<dbReference type="InterPro" id="IPR027409">
    <property type="entry name" value="GroEL-like_apical_dom_sf"/>
</dbReference>
<dbReference type="InterPro" id="IPR027413">
    <property type="entry name" value="GROEL-like_equatorial_sf"/>
</dbReference>
<dbReference type="InterPro" id="IPR027410">
    <property type="entry name" value="TCP-1-like_intermed_sf"/>
</dbReference>
<dbReference type="InterPro" id="IPR053374">
    <property type="entry name" value="TCP-1_chaperonin"/>
</dbReference>
<dbReference type="NCBIfam" id="TIGR02341">
    <property type="entry name" value="chap_CCT_beta"/>
    <property type="match status" value="1"/>
</dbReference>
<dbReference type="NCBIfam" id="NF041083">
    <property type="entry name" value="thermosome_beta"/>
    <property type="match status" value="1"/>
</dbReference>
<dbReference type="PANTHER" id="PTHR11353">
    <property type="entry name" value="CHAPERONIN"/>
    <property type="match status" value="1"/>
</dbReference>
<dbReference type="Pfam" id="PF00118">
    <property type="entry name" value="Cpn60_TCP1"/>
    <property type="match status" value="1"/>
</dbReference>
<dbReference type="PRINTS" id="PR00304">
    <property type="entry name" value="TCOMPLEXTCP1"/>
</dbReference>
<dbReference type="SUPFAM" id="SSF52029">
    <property type="entry name" value="GroEL apical domain-like"/>
    <property type="match status" value="1"/>
</dbReference>
<dbReference type="SUPFAM" id="SSF48592">
    <property type="entry name" value="GroEL equatorial domain-like"/>
    <property type="match status" value="1"/>
</dbReference>
<dbReference type="SUPFAM" id="SSF54849">
    <property type="entry name" value="GroEL-intermediate domain like"/>
    <property type="match status" value="1"/>
</dbReference>
<dbReference type="PROSITE" id="PS00750">
    <property type="entry name" value="TCP1_1"/>
    <property type="match status" value="1"/>
</dbReference>
<dbReference type="PROSITE" id="PS00751">
    <property type="entry name" value="TCP1_2"/>
    <property type="match status" value="1"/>
</dbReference>
<dbReference type="PROSITE" id="PS00995">
    <property type="entry name" value="TCP1_3"/>
    <property type="match status" value="1"/>
</dbReference>
<comment type="function">
    <text evidence="3">Molecular chaperone; assists the folding of proteins upon ATP hydrolysis. Known to play a role, in vitro, in the folding of actin and tubulin.</text>
</comment>
<comment type="subunit">
    <text evidence="4">Heterooligomeric complex of about 850 to 900 kDa that forms two stacked rings, 12 to 16 nm in diameter.</text>
</comment>
<comment type="subcellular location">
    <subcellularLocation>
        <location evidence="3">Cytoplasm</location>
    </subcellularLocation>
</comment>
<comment type="similarity">
    <text evidence="1">Belongs to the TCP-1 chaperonin family.</text>
</comment>
<accession>Q940P8</accession>
<name>TCPB_ARATH</name>
<protein>
    <recommendedName>
        <fullName evidence="2">T-complex protein 1 subunit beta</fullName>
        <shortName evidence="2">TCP-1-beta</shortName>
    </recommendedName>
    <alternativeName>
        <fullName evidence="2">CCT-beta</fullName>
    </alternativeName>
    <alternativeName>
        <fullName evidence="3">Chaperonin CCT2</fullName>
    </alternativeName>
</protein>
<proteinExistence type="evidence at protein level"/>
<organism evidence="6">
    <name type="scientific">Arabidopsis thaliana</name>
    <name type="common">Mouse-ear cress</name>
    <dbReference type="NCBI Taxonomy" id="3702"/>
    <lineage>
        <taxon>Eukaryota</taxon>
        <taxon>Viridiplantae</taxon>
        <taxon>Streptophyta</taxon>
        <taxon>Embryophyta</taxon>
        <taxon>Tracheophyta</taxon>
        <taxon>Spermatophyta</taxon>
        <taxon>Magnoliopsida</taxon>
        <taxon>eudicotyledons</taxon>
        <taxon>Gunneridae</taxon>
        <taxon>Pentapetalae</taxon>
        <taxon>rosids</taxon>
        <taxon>malvids</taxon>
        <taxon>Brassicales</taxon>
        <taxon>Brassicaceae</taxon>
        <taxon>Camelineae</taxon>
        <taxon>Arabidopsis</taxon>
    </lineage>
</organism>
<keyword id="KW-0067">ATP-binding</keyword>
<keyword id="KW-0143">Chaperone</keyword>
<keyword id="KW-0963">Cytoplasm</keyword>
<keyword id="KW-0547">Nucleotide-binding</keyword>
<keyword id="KW-1185">Reference proteome</keyword>
<reference key="1">
    <citation type="journal article" date="2000" name="Nature">
        <title>Sequence and analysis of chromosome 5 of the plant Arabidopsis thaliana.</title>
        <authorList>
            <person name="Tabata S."/>
            <person name="Kaneko T."/>
            <person name="Nakamura Y."/>
            <person name="Kotani H."/>
            <person name="Kato T."/>
            <person name="Asamizu E."/>
            <person name="Miyajima N."/>
            <person name="Sasamoto S."/>
            <person name="Kimura T."/>
            <person name="Hosouchi T."/>
            <person name="Kawashima K."/>
            <person name="Kohara M."/>
            <person name="Matsumoto M."/>
            <person name="Matsuno A."/>
            <person name="Muraki A."/>
            <person name="Nakayama S."/>
            <person name="Nakazaki N."/>
            <person name="Naruo K."/>
            <person name="Okumura S."/>
            <person name="Shinpo S."/>
            <person name="Takeuchi C."/>
            <person name="Wada T."/>
            <person name="Watanabe A."/>
            <person name="Yamada M."/>
            <person name="Yasuda M."/>
            <person name="Sato S."/>
            <person name="de la Bastide M."/>
            <person name="Huang E."/>
            <person name="Spiegel L."/>
            <person name="Gnoj L."/>
            <person name="O'Shaughnessy A."/>
            <person name="Preston R."/>
            <person name="Habermann K."/>
            <person name="Murray J."/>
            <person name="Johnson D."/>
            <person name="Rohlfing T."/>
            <person name="Nelson J."/>
            <person name="Stoneking T."/>
            <person name="Pepin K."/>
            <person name="Spieth J."/>
            <person name="Sekhon M."/>
            <person name="Armstrong J."/>
            <person name="Becker M."/>
            <person name="Belter E."/>
            <person name="Cordum H."/>
            <person name="Cordes M."/>
            <person name="Courtney L."/>
            <person name="Courtney W."/>
            <person name="Dante M."/>
            <person name="Du H."/>
            <person name="Edwards J."/>
            <person name="Fryman J."/>
            <person name="Haakensen B."/>
            <person name="Lamar E."/>
            <person name="Latreille P."/>
            <person name="Leonard S."/>
            <person name="Meyer R."/>
            <person name="Mulvaney E."/>
            <person name="Ozersky P."/>
            <person name="Riley A."/>
            <person name="Strowmatt C."/>
            <person name="Wagner-McPherson C."/>
            <person name="Wollam A."/>
            <person name="Yoakum M."/>
            <person name="Bell M."/>
            <person name="Dedhia N."/>
            <person name="Parnell L."/>
            <person name="Shah R."/>
            <person name="Rodriguez M."/>
            <person name="Hoon See L."/>
            <person name="Vil D."/>
            <person name="Baker J."/>
            <person name="Kirchoff K."/>
            <person name="Toth K."/>
            <person name="King L."/>
            <person name="Bahret A."/>
            <person name="Miller B."/>
            <person name="Marra M.A."/>
            <person name="Martienssen R."/>
            <person name="McCombie W.R."/>
            <person name="Wilson R.K."/>
            <person name="Murphy G."/>
            <person name="Bancroft I."/>
            <person name="Volckaert G."/>
            <person name="Wambutt R."/>
            <person name="Duesterhoeft A."/>
            <person name="Stiekema W."/>
            <person name="Pohl T."/>
            <person name="Entian K.-D."/>
            <person name="Terryn N."/>
            <person name="Hartley N."/>
            <person name="Bent E."/>
            <person name="Johnson S."/>
            <person name="Langham S.-A."/>
            <person name="McCullagh B."/>
            <person name="Robben J."/>
            <person name="Grymonprez B."/>
            <person name="Zimmermann W."/>
            <person name="Ramsperger U."/>
            <person name="Wedler H."/>
            <person name="Balke K."/>
            <person name="Wedler E."/>
            <person name="Peters S."/>
            <person name="van Staveren M."/>
            <person name="Dirkse W."/>
            <person name="Mooijman P."/>
            <person name="Klein Lankhorst R."/>
            <person name="Weitzenegger T."/>
            <person name="Bothe G."/>
            <person name="Rose M."/>
            <person name="Hauf J."/>
            <person name="Berneiser S."/>
            <person name="Hempel S."/>
            <person name="Feldpausch M."/>
            <person name="Lamberth S."/>
            <person name="Villarroel R."/>
            <person name="Gielen J."/>
            <person name="Ardiles W."/>
            <person name="Bents O."/>
            <person name="Lemcke K."/>
            <person name="Kolesov G."/>
            <person name="Mayer K.F.X."/>
            <person name="Rudd S."/>
            <person name="Schoof H."/>
            <person name="Schueller C."/>
            <person name="Zaccaria P."/>
            <person name="Mewes H.-W."/>
            <person name="Bevan M."/>
            <person name="Fransz P.F."/>
        </authorList>
    </citation>
    <scope>NUCLEOTIDE SEQUENCE [LARGE SCALE GENOMIC DNA]</scope>
    <source>
        <strain>cv. Columbia</strain>
    </source>
</reference>
<reference key="2">
    <citation type="journal article" date="2017" name="Plant J.">
        <title>Araport11: a complete reannotation of the Arabidopsis thaliana reference genome.</title>
        <authorList>
            <person name="Cheng C.Y."/>
            <person name="Krishnakumar V."/>
            <person name="Chan A.P."/>
            <person name="Thibaud-Nissen F."/>
            <person name="Schobel S."/>
            <person name="Town C.D."/>
        </authorList>
    </citation>
    <scope>GENOME REANNOTATION</scope>
    <source>
        <strain>cv. Columbia</strain>
    </source>
</reference>
<reference key="3">
    <citation type="journal article" date="2003" name="Science">
        <title>Empirical analysis of transcriptional activity in the Arabidopsis genome.</title>
        <authorList>
            <person name="Yamada K."/>
            <person name="Lim J."/>
            <person name="Dale J.M."/>
            <person name="Chen H."/>
            <person name="Shinn P."/>
            <person name="Palm C.J."/>
            <person name="Southwick A.M."/>
            <person name="Wu H.C."/>
            <person name="Kim C.J."/>
            <person name="Nguyen M."/>
            <person name="Pham P.K."/>
            <person name="Cheuk R.F."/>
            <person name="Karlin-Newmann G."/>
            <person name="Liu S.X."/>
            <person name="Lam B."/>
            <person name="Sakano H."/>
            <person name="Wu T."/>
            <person name="Yu G."/>
            <person name="Miranda M."/>
            <person name="Quach H.L."/>
            <person name="Tripp M."/>
            <person name="Chang C.H."/>
            <person name="Lee J.M."/>
            <person name="Toriumi M.J."/>
            <person name="Chan M.M."/>
            <person name="Tang C.C."/>
            <person name="Onodera C.S."/>
            <person name="Deng J.M."/>
            <person name="Akiyama K."/>
            <person name="Ansari Y."/>
            <person name="Arakawa T."/>
            <person name="Banh J."/>
            <person name="Banno F."/>
            <person name="Bowser L."/>
            <person name="Brooks S.Y."/>
            <person name="Carninci P."/>
            <person name="Chao Q."/>
            <person name="Choy N."/>
            <person name="Enju A."/>
            <person name="Goldsmith A.D."/>
            <person name="Gurjal M."/>
            <person name="Hansen N.F."/>
            <person name="Hayashizaki Y."/>
            <person name="Johnson-Hopson C."/>
            <person name="Hsuan V.W."/>
            <person name="Iida K."/>
            <person name="Karnes M."/>
            <person name="Khan S."/>
            <person name="Koesema E."/>
            <person name="Ishida J."/>
            <person name="Jiang P.X."/>
            <person name="Jones T."/>
            <person name="Kawai J."/>
            <person name="Kamiya A."/>
            <person name="Meyers C."/>
            <person name="Nakajima M."/>
            <person name="Narusaka M."/>
            <person name="Seki M."/>
            <person name="Sakurai T."/>
            <person name="Satou M."/>
            <person name="Tamse R."/>
            <person name="Vaysberg M."/>
            <person name="Wallender E.K."/>
            <person name="Wong C."/>
            <person name="Yamamura Y."/>
            <person name="Yuan S."/>
            <person name="Shinozaki K."/>
            <person name="Davis R.W."/>
            <person name="Theologis A."/>
            <person name="Ecker J.R."/>
        </authorList>
    </citation>
    <scope>NUCLEOTIDE SEQUENCE [LARGE SCALE MRNA]</scope>
    <source>
        <strain>cv. Columbia</strain>
    </source>
</reference>
<reference key="4">
    <citation type="submission" date="2002-03" db="EMBL/GenBank/DDBJ databases">
        <title>Full-length cDNA from Arabidopsis thaliana.</title>
        <authorList>
            <person name="Brover V.V."/>
            <person name="Troukhan M.E."/>
            <person name="Alexandrov N.A."/>
            <person name="Lu Y.-P."/>
            <person name="Flavell R.B."/>
            <person name="Feldmann K.A."/>
        </authorList>
    </citation>
    <scope>NUCLEOTIDE SEQUENCE [LARGE SCALE MRNA]</scope>
</reference>
<reference key="5">
    <citation type="journal article" date="2001" name="Cell Stress Chaperones">
        <title>Arabidopsis thaliana type I and II chaperonins.</title>
        <authorList>
            <person name="Hill J.E."/>
            <person name="Hemmingsen S.M."/>
        </authorList>
    </citation>
    <scope>GENE FAMILY</scope>
    <scope>NOMENCLATURE</scope>
    <scope>SUBUNIT</scope>
</reference>
<evidence type="ECO:0000255" key="1">
    <source>
        <dbReference type="RuleBase" id="RU004187"/>
    </source>
</evidence>
<evidence type="ECO:0000303" key="2">
    <source>
    </source>
</evidence>
<evidence type="ECO:0000305" key="3"/>
<evidence type="ECO:0000305" key="4">
    <source>
    </source>
</evidence>
<evidence type="ECO:0000312" key="5">
    <source>
        <dbReference type="Araport" id="AT5G20890"/>
    </source>
</evidence>
<evidence type="ECO:0000312" key="6">
    <source>
        <dbReference type="EMBL" id="AAL06871.1"/>
    </source>
</evidence>
<gene>
    <name evidence="3" type="primary">CCT2</name>
    <name evidence="5" type="ordered locus">At5g20890</name>
    <name evidence="6" type="ORF">F22D1.60</name>
</gene>
<feature type="chain" id="PRO_0000431659" description="T-complex protein 1 subunit beta">
    <location>
        <begin position="1"/>
        <end position="527"/>
    </location>
</feature>
<sequence length="527" mass="57286">MPIDKIFKDDASEEKGERARMASFVGAMAISDLVKSTLGPKGMDKILQSTGRGHAVTVTNDGATILKSLHIDNPAAKVLVDISKVQDDEVGDGTTSVVVLAGELLREAEKLVASKIHPMTIIAGYRMASECARNALLKRVIDNKDNAEKFRSDLLKIAMTTLCSKILSQDKEHFAEMAVDAVFRLKGSTNLEAIQIIKKPGGSLKDSFLDEGFILDKKIGIGQPKRIENANILVANTAMDTDKVKIYGARVRVDSMTKVAEIEGAEKEKMKDKVKKIIGHGINCFVNRQLIYNFPEELFADAGILAIEHADFEGIERLGLVTGGEIASTFDNPESVKLGHCKLIEEIMIGEDKLIHFSGCEMGQACSIVLRGASHHVLDEAERSLHDALCVLSQTVNDTRVLLGGGWPEMVMAKEVDELARKTAGKKSHAIEAFSRALVAIPTTIADNAGLDSAELVAQLRAEHHTEGCNAGIDVITGAVGDMEERGIYEAFKVKQAVLLSATEASEMILRVDEIITCAPRRREDRM</sequence>